<protein>
    <recommendedName>
        <fullName evidence="1">Probable malate:quinone oxidoreductase</fullName>
        <ecNumber evidence="1">1.1.5.4</ecNumber>
    </recommendedName>
    <alternativeName>
        <fullName evidence="1">MQO</fullName>
    </alternativeName>
    <alternativeName>
        <fullName evidence="1">Malate dehydrogenase [quinone]</fullName>
    </alternativeName>
</protein>
<feature type="chain" id="PRO_1000191313" description="Probable malate:quinone oxidoreductase">
    <location>
        <begin position="1"/>
        <end position="548"/>
    </location>
</feature>
<feature type="region of interest" description="Disordered" evidence="2">
    <location>
        <begin position="521"/>
        <end position="548"/>
    </location>
</feature>
<feature type="compositionally biased region" description="Low complexity" evidence="2">
    <location>
        <begin position="530"/>
        <end position="541"/>
    </location>
</feature>
<accession>B7N5H2</accession>
<reference key="1">
    <citation type="journal article" date="2009" name="PLoS Genet.">
        <title>Organised genome dynamics in the Escherichia coli species results in highly diverse adaptive paths.</title>
        <authorList>
            <person name="Touchon M."/>
            <person name="Hoede C."/>
            <person name="Tenaillon O."/>
            <person name="Barbe V."/>
            <person name="Baeriswyl S."/>
            <person name="Bidet P."/>
            <person name="Bingen E."/>
            <person name="Bonacorsi S."/>
            <person name="Bouchier C."/>
            <person name="Bouvet O."/>
            <person name="Calteau A."/>
            <person name="Chiapello H."/>
            <person name="Clermont O."/>
            <person name="Cruveiller S."/>
            <person name="Danchin A."/>
            <person name="Diard M."/>
            <person name="Dossat C."/>
            <person name="Karoui M.E."/>
            <person name="Frapy E."/>
            <person name="Garry L."/>
            <person name="Ghigo J.M."/>
            <person name="Gilles A.M."/>
            <person name="Johnson J."/>
            <person name="Le Bouguenec C."/>
            <person name="Lescat M."/>
            <person name="Mangenot S."/>
            <person name="Martinez-Jehanne V."/>
            <person name="Matic I."/>
            <person name="Nassif X."/>
            <person name="Oztas S."/>
            <person name="Petit M.A."/>
            <person name="Pichon C."/>
            <person name="Rouy Z."/>
            <person name="Ruf C.S."/>
            <person name="Schneider D."/>
            <person name="Tourret J."/>
            <person name="Vacherie B."/>
            <person name="Vallenet D."/>
            <person name="Medigue C."/>
            <person name="Rocha E.P.C."/>
            <person name="Denamur E."/>
        </authorList>
    </citation>
    <scope>NUCLEOTIDE SEQUENCE [LARGE SCALE GENOMIC DNA]</scope>
    <source>
        <strain>UMN026 / ExPEC</strain>
    </source>
</reference>
<comment type="catalytic activity">
    <reaction evidence="1">
        <text>(S)-malate + a quinone = a quinol + oxaloacetate</text>
        <dbReference type="Rhea" id="RHEA:46012"/>
        <dbReference type="ChEBI" id="CHEBI:15589"/>
        <dbReference type="ChEBI" id="CHEBI:16452"/>
        <dbReference type="ChEBI" id="CHEBI:24646"/>
        <dbReference type="ChEBI" id="CHEBI:132124"/>
        <dbReference type="EC" id="1.1.5.4"/>
    </reaction>
</comment>
<comment type="cofactor">
    <cofactor evidence="1">
        <name>FAD</name>
        <dbReference type="ChEBI" id="CHEBI:57692"/>
    </cofactor>
</comment>
<comment type="pathway">
    <text evidence="1">Carbohydrate metabolism; tricarboxylic acid cycle; oxaloacetate from (S)-malate (quinone route): step 1/1.</text>
</comment>
<comment type="similarity">
    <text evidence="1">Belongs to the MQO family.</text>
</comment>
<sequence length="548" mass="60244">MKKVTAMLFSMAVGLNAVSMAAKAKASEEQETDVLLIGGGIMSATLGTYLRELEPEWSMTMVERLEGVAQESSNGWNNAGTGHSALMELNYTPQNADGSISIEKAVAINEAFQISRQFWAHQVERGVLRTPRSFINTVPHMSFVWGEDNVNFLRARYAALQQSSLFRGMRYSEDHAQIKEWAPLVMEGRDPQQKVAATRTEIGTDVNYGEITRQLIASLQKKSNFSLQLSSEVRALKRNDDNTWTVTVADLKNGTAQNIRAKFVFIGAGGAALKLLQESGIPEAKDYAGFPVGGQFLVSENPDVVNHHLAKVYGKASVGAPPMSVPHIDTRVLDGKRVVLFGPFATFSTKFLKNGSLWDLMSSTTTSNVMPMMHVGLDNFDLVKYLVSQVMLSEEDRFEALKEYYPQAKKEDWRLWQAGQRVQIIKRDAEKGGVLRLGTEVVSDQQGTIAALLGASPGASTAAPIMLNLLEKVFGDRVSSPQWQATLKAIVPSYGRKLNGDVAATERELQYTSEVLGLKYDKPQAADSTPKPQLKPQPVQKEVADIAL</sequence>
<dbReference type="EC" id="1.1.5.4" evidence="1"/>
<dbReference type="EMBL" id="CU928163">
    <property type="protein sequence ID" value="CAR13731.1"/>
    <property type="molecule type" value="Genomic_DNA"/>
</dbReference>
<dbReference type="RefSeq" id="WP_000758076.1">
    <property type="nucleotide sequence ID" value="NC_011751.1"/>
</dbReference>
<dbReference type="RefSeq" id="YP_002413259.1">
    <property type="nucleotide sequence ID" value="NC_011751.1"/>
</dbReference>
<dbReference type="SMR" id="B7N5H2"/>
<dbReference type="STRING" id="585056.ECUMN_2546"/>
<dbReference type="GeneID" id="75172338"/>
<dbReference type="KEGG" id="eum:ECUMN_2546"/>
<dbReference type="PATRIC" id="fig|585056.7.peg.2728"/>
<dbReference type="HOGENOM" id="CLU_028151_0_0_6"/>
<dbReference type="UniPathway" id="UPA00223">
    <property type="reaction ID" value="UER01008"/>
</dbReference>
<dbReference type="Proteomes" id="UP000007097">
    <property type="component" value="Chromosome"/>
</dbReference>
<dbReference type="GO" id="GO:0047545">
    <property type="term" value="F:2-hydroxyglutarate dehydrogenase activity"/>
    <property type="evidence" value="ECO:0007669"/>
    <property type="project" value="TreeGrafter"/>
</dbReference>
<dbReference type="GO" id="GO:0008924">
    <property type="term" value="F:L-malate dehydrogenase (quinone) activity"/>
    <property type="evidence" value="ECO:0007669"/>
    <property type="project" value="UniProtKB-UniRule"/>
</dbReference>
<dbReference type="GO" id="GO:0006099">
    <property type="term" value="P:tricarboxylic acid cycle"/>
    <property type="evidence" value="ECO:0007669"/>
    <property type="project" value="UniProtKB-UniRule"/>
</dbReference>
<dbReference type="Gene3D" id="3.30.9.10">
    <property type="entry name" value="D-Amino Acid Oxidase, subunit A, domain 2"/>
    <property type="match status" value="1"/>
</dbReference>
<dbReference type="Gene3D" id="3.50.50.60">
    <property type="entry name" value="FAD/NAD(P)-binding domain"/>
    <property type="match status" value="1"/>
</dbReference>
<dbReference type="HAMAP" id="MF_00212">
    <property type="entry name" value="MQO"/>
    <property type="match status" value="1"/>
</dbReference>
<dbReference type="InterPro" id="IPR036188">
    <property type="entry name" value="FAD/NAD-bd_sf"/>
</dbReference>
<dbReference type="InterPro" id="IPR006231">
    <property type="entry name" value="MQO"/>
</dbReference>
<dbReference type="NCBIfam" id="TIGR01320">
    <property type="entry name" value="mal_quin_oxido"/>
    <property type="match status" value="1"/>
</dbReference>
<dbReference type="NCBIfam" id="NF003603">
    <property type="entry name" value="PRK05257.1-1"/>
    <property type="match status" value="1"/>
</dbReference>
<dbReference type="NCBIfam" id="NF003605">
    <property type="entry name" value="PRK05257.1-4"/>
    <property type="match status" value="1"/>
</dbReference>
<dbReference type="NCBIfam" id="NF003606">
    <property type="entry name" value="PRK05257.2-1"/>
    <property type="match status" value="1"/>
</dbReference>
<dbReference type="NCBIfam" id="NF003608">
    <property type="entry name" value="PRK05257.2-4"/>
    <property type="match status" value="1"/>
</dbReference>
<dbReference type="NCBIfam" id="NF003611">
    <property type="entry name" value="PRK05257.3-2"/>
    <property type="match status" value="1"/>
</dbReference>
<dbReference type="NCBIfam" id="NF009875">
    <property type="entry name" value="PRK13339.1"/>
    <property type="match status" value="1"/>
</dbReference>
<dbReference type="PANTHER" id="PTHR43104">
    <property type="entry name" value="L-2-HYDROXYGLUTARATE DEHYDROGENASE, MITOCHONDRIAL"/>
    <property type="match status" value="1"/>
</dbReference>
<dbReference type="PANTHER" id="PTHR43104:SF2">
    <property type="entry name" value="L-2-HYDROXYGLUTARATE DEHYDROGENASE, MITOCHONDRIAL"/>
    <property type="match status" value="1"/>
</dbReference>
<dbReference type="Pfam" id="PF06039">
    <property type="entry name" value="Mqo"/>
    <property type="match status" value="1"/>
</dbReference>
<dbReference type="SUPFAM" id="SSF51905">
    <property type="entry name" value="FAD/NAD(P)-binding domain"/>
    <property type="match status" value="1"/>
</dbReference>
<gene>
    <name evidence="1" type="primary">mqo</name>
    <name type="ordered locus">ECUMN_2546</name>
</gene>
<organism>
    <name type="scientific">Escherichia coli O17:K52:H18 (strain UMN026 / ExPEC)</name>
    <dbReference type="NCBI Taxonomy" id="585056"/>
    <lineage>
        <taxon>Bacteria</taxon>
        <taxon>Pseudomonadati</taxon>
        <taxon>Pseudomonadota</taxon>
        <taxon>Gammaproteobacteria</taxon>
        <taxon>Enterobacterales</taxon>
        <taxon>Enterobacteriaceae</taxon>
        <taxon>Escherichia</taxon>
    </lineage>
</organism>
<evidence type="ECO:0000255" key="1">
    <source>
        <dbReference type="HAMAP-Rule" id="MF_00212"/>
    </source>
</evidence>
<evidence type="ECO:0000256" key="2">
    <source>
        <dbReference type="SAM" id="MobiDB-lite"/>
    </source>
</evidence>
<keyword id="KW-0274">FAD</keyword>
<keyword id="KW-0285">Flavoprotein</keyword>
<keyword id="KW-0560">Oxidoreductase</keyword>
<keyword id="KW-0816">Tricarboxylic acid cycle</keyword>
<proteinExistence type="inferred from homology"/>
<name>MQO_ECOLU</name>